<dbReference type="EMBL" id="AF021236">
    <property type="protein sequence ID" value="AAC40995.1"/>
    <property type="molecule type" value="mRNA"/>
</dbReference>
<dbReference type="SMR" id="O71025"/>
<dbReference type="GO" id="GO:0044423">
    <property type="term" value="C:virion component"/>
    <property type="evidence" value="ECO:0007669"/>
    <property type="project" value="UniProtKB-KW"/>
</dbReference>
<dbReference type="GO" id="GO:0005198">
    <property type="term" value="F:structural molecule activity"/>
    <property type="evidence" value="ECO:0007669"/>
    <property type="project" value="InterPro"/>
</dbReference>
<dbReference type="InterPro" id="IPR002614">
    <property type="entry name" value="Inner_layer_core_VP3_Orbivir"/>
</dbReference>
<dbReference type="InterPro" id="IPR016029">
    <property type="entry name" value="Inner_layer_core_VP3_Reovir"/>
</dbReference>
<dbReference type="Pfam" id="PF01700">
    <property type="entry name" value="Orbi_VP3"/>
    <property type="match status" value="1"/>
</dbReference>
<dbReference type="SUPFAM" id="SSF56831">
    <property type="entry name" value="Reovirus inner layer core protein p3"/>
    <property type="match status" value="1"/>
</dbReference>
<name>VP3_AHSV6</name>
<accession>O71025</accession>
<keyword id="KW-0946">Virion</keyword>
<sequence>MQGNERIQDKNEKEKAYAPYLDGASVSTDNGPILSVFALQEIMQKIRQNQSDMAAHAPDVDGAIPEVMTIISGIKGLLEEKDYKVINAPPNSFRTIPMQSMEYVLQVNTFYERMSEIGGPVDETDPIGFYALILEKLKFLKSEGAFILQGIATKDYRGAEIADPEIIGVSFQNALSHLAAIDRQIIQDTLNGMIIENGLVADRNVDVFRAAMSDPIYRIRNVLQGYIEGIQYGELRESVNWLMRLGLRKRIEFANDFLTDFRRADTIWIISQRLPINANVIWNVPRCHIANLNTNVALCLPTGEYLMPNPRINSITITQRITQTNPFSIISGLTPTAVQMNDVRKIYLALMFPNQIILDIKPDSSHAVDPVLRMVAGVLGHVMFTYGPIMTNITPTMAELLDAALSDYLLYMYNNRIPINYGPTGQPLDFRIGARNQYDCNAFRADPQTGRGYNGWGVVDVQRVQPSPYDHVQRVIRYCDIDSREIIDPRTYGMNMTYPIFREMLRMLVAAGKDQEAAYLRQMLPFHMIRFARINQIINEDLLSAFSLPDQNFDVVLHNLIQGNFGETDPVILEVSWASIWFAFVRRFEPIARSDLLEAAPLIEARYAAELSTMQMDVQQLRMMRARVPDTVINATPSQCWKAVLKNAPEPIKNLMNLSHSFSFVNVRDIVRWSQQRDIQESLAYVLNREAWAIANDFEDLMLVDHVYIQRTMLPEPRLDDINEFRRQGFFHTNMIDGAPPIGDVTHYTYAIANLQANMGQFRAAIRRTLDDNGWIQFGGMLRNIKIKFFDSRPPDEILTAMPYVYTEEERDGVRMVAFKYATTATAYFLLYNVEYSNTPDTLITVNPTFTMTKIHMRKKIVRRVRAPDVLSQVNKRLVAYKGKMRLMDVTKCLKTGVQLARPTI</sequence>
<organism>
    <name type="scientific">African horse sickness virus 6</name>
    <name type="common">AHSV-6</name>
    <dbReference type="NCBI Taxonomy" id="86060"/>
    <lineage>
        <taxon>Viruses</taxon>
        <taxon>Riboviria</taxon>
        <taxon>Orthornavirae</taxon>
        <taxon>Duplornaviricota</taxon>
        <taxon>Resentoviricetes</taxon>
        <taxon>Reovirales</taxon>
        <taxon>Sedoreoviridae</taxon>
        <taxon>Orbivirus</taxon>
        <taxon>African horse sickness virus</taxon>
    </lineage>
</organism>
<comment type="function">
    <text>The VP3 protein is one of the five proteins (with VP1, VP4, VP6 and VP7) which form the inner capsid of the virus.</text>
</comment>
<comment type="subcellular location">
    <subcellularLocation>
        <location evidence="1">Virion</location>
    </subcellularLocation>
</comment>
<comment type="similarity">
    <text evidence="1">Belongs to the orbivirus VP3 family.</text>
</comment>
<organismHost>
    <name type="scientific">Camelus dromedarius</name>
    <name type="common">Dromedary</name>
    <name type="synonym">Arabian camel</name>
    <dbReference type="NCBI Taxonomy" id="9838"/>
</organismHost>
<organismHost>
    <name type="scientific">Canis lupus familiaris</name>
    <name type="common">Dog</name>
    <name type="synonym">Canis familiaris</name>
    <dbReference type="NCBI Taxonomy" id="9615"/>
</organismHost>
<organismHost>
    <name type="scientific">Equus asinus</name>
    <name type="common">Donkey</name>
    <name type="synonym">Equus africanus asinus</name>
    <dbReference type="NCBI Taxonomy" id="9793"/>
</organismHost>
<organismHost>
    <name type="scientific">Equus caballus</name>
    <name type="common">Horse</name>
    <dbReference type="NCBI Taxonomy" id="9796"/>
</organismHost>
<organismHost>
    <name type="scientific">Equus hemionus</name>
    <name type="common">Onager</name>
    <name type="synonym">Asian wild ass</name>
    <dbReference type="NCBI Taxonomy" id="9794"/>
</organismHost>
<organismHost>
    <name type="scientific">Equus quagga burchellii</name>
    <name type="common">Burchell's zebra</name>
    <name type="synonym">Equus burchelli</name>
    <dbReference type="NCBI Taxonomy" id="89252"/>
</organismHost>
<organismHost>
    <name type="scientific">Loxodonta africana</name>
    <name type="common">African elephant</name>
    <dbReference type="NCBI Taxonomy" id="9785"/>
</organismHost>
<gene>
    <name type="primary">Segment-3</name>
    <name type="synonym">L3</name>
</gene>
<protein>
    <recommendedName>
        <fullName>Core protein VP3</fullName>
    </recommendedName>
</protein>
<reference key="1">
    <citation type="journal article" date="1998" name="Virus Res.">
        <title>The complete sequence of four major structural proteins of African horse sickness virus serotype 6: evolutionary relationships within and between the orbiviruses.</title>
        <authorList>
            <person name="Williams C.F."/>
            <person name="Inoue T."/>
            <person name="Lucus A.-M."/>
            <person name="Zanotto P."/>
            <person name="Roy P."/>
        </authorList>
    </citation>
    <scope>NUCLEOTIDE SEQUENCE [MRNA]</scope>
</reference>
<feature type="chain" id="PRO_0000222700" description="Core protein VP3">
    <location>
        <begin position="1"/>
        <end position="905"/>
    </location>
</feature>
<evidence type="ECO:0000305" key="1"/>
<proteinExistence type="evidence at transcript level"/>